<organism>
    <name type="scientific">Methylobacterium nodulans (strain LMG 21967 / CNCM I-2342 / ORS 2060)</name>
    <dbReference type="NCBI Taxonomy" id="460265"/>
    <lineage>
        <taxon>Bacteria</taxon>
        <taxon>Pseudomonadati</taxon>
        <taxon>Pseudomonadota</taxon>
        <taxon>Alphaproteobacteria</taxon>
        <taxon>Hyphomicrobiales</taxon>
        <taxon>Methylobacteriaceae</taxon>
        <taxon>Methylobacterium</taxon>
    </lineage>
</organism>
<feature type="chain" id="PRO_1000116250" description="Adenine phosphoribosyltransferase">
    <location>
        <begin position="1"/>
        <end position="181"/>
    </location>
</feature>
<comment type="function">
    <text evidence="1">Catalyzes a salvage reaction resulting in the formation of AMP, that is energically less costly than de novo synthesis.</text>
</comment>
<comment type="catalytic activity">
    <reaction evidence="1">
        <text>AMP + diphosphate = 5-phospho-alpha-D-ribose 1-diphosphate + adenine</text>
        <dbReference type="Rhea" id="RHEA:16609"/>
        <dbReference type="ChEBI" id="CHEBI:16708"/>
        <dbReference type="ChEBI" id="CHEBI:33019"/>
        <dbReference type="ChEBI" id="CHEBI:58017"/>
        <dbReference type="ChEBI" id="CHEBI:456215"/>
        <dbReference type="EC" id="2.4.2.7"/>
    </reaction>
</comment>
<comment type="pathway">
    <text evidence="1">Purine metabolism; AMP biosynthesis via salvage pathway; AMP from adenine: step 1/1.</text>
</comment>
<comment type="subunit">
    <text evidence="1">Homodimer.</text>
</comment>
<comment type="subcellular location">
    <subcellularLocation>
        <location evidence="1">Cytoplasm</location>
    </subcellularLocation>
</comment>
<comment type="similarity">
    <text evidence="1">Belongs to the purine/pyrimidine phosphoribosyltransferase family.</text>
</comment>
<gene>
    <name evidence="1" type="primary">apt</name>
    <name type="ordered locus">Mnod_7279</name>
</gene>
<evidence type="ECO:0000255" key="1">
    <source>
        <dbReference type="HAMAP-Rule" id="MF_00004"/>
    </source>
</evidence>
<keyword id="KW-0963">Cytoplasm</keyword>
<keyword id="KW-0328">Glycosyltransferase</keyword>
<keyword id="KW-0660">Purine salvage</keyword>
<keyword id="KW-1185">Reference proteome</keyword>
<keyword id="KW-0808">Transferase</keyword>
<accession>B8ILP3</accession>
<name>APT_METNO</name>
<sequence length="181" mass="19174">MDPRTLSALKDAIRSIPDYPKPGIVFRDITTLLGDPGAFRRAVDALVHPFAGGRIDQVAGIEARGFILGGAVAHQLSSGFVPIRKKGKLPHTTVSIAYALEYGTDEMEIHSDAVKPGDRVVLVDDLIATGGTAKAAVDLLRQIGAEVVAACFVIDLPELGGAAKLRALDVPVWTLVEFEGH</sequence>
<reference key="1">
    <citation type="submission" date="2009-01" db="EMBL/GenBank/DDBJ databases">
        <title>Complete sequence of chromosome of Methylobacterium nodulans ORS 2060.</title>
        <authorList>
            <consortium name="US DOE Joint Genome Institute"/>
            <person name="Lucas S."/>
            <person name="Copeland A."/>
            <person name="Lapidus A."/>
            <person name="Glavina del Rio T."/>
            <person name="Dalin E."/>
            <person name="Tice H."/>
            <person name="Bruce D."/>
            <person name="Goodwin L."/>
            <person name="Pitluck S."/>
            <person name="Sims D."/>
            <person name="Brettin T."/>
            <person name="Detter J.C."/>
            <person name="Han C."/>
            <person name="Larimer F."/>
            <person name="Land M."/>
            <person name="Hauser L."/>
            <person name="Kyrpides N."/>
            <person name="Ivanova N."/>
            <person name="Marx C.J."/>
            <person name="Richardson P."/>
        </authorList>
    </citation>
    <scope>NUCLEOTIDE SEQUENCE [LARGE SCALE GENOMIC DNA]</scope>
    <source>
        <strain>LMG 21967 / CNCM I-2342 / ORS 2060</strain>
    </source>
</reference>
<protein>
    <recommendedName>
        <fullName evidence="1">Adenine phosphoribosyltransferase</fullName>
        <shortName evidence="1">APRT</shortName>
        <ecNumber evidence="1">2.4.2.7</ecNumber>
    </recommendedName>
</protein>
<proteinExistence type="inferred from homology"/>
<dbReference type="EC" id="2.4.2.7" evidence="1"/>
<dbReference type="EMBL" id="CP001349">
    <property type="protein sequence ID" value="ACL62018.1"/>
    <property type="molecule type" value="Genomic_DNA"/>
</dbReference>
<dbReference type="RefSeq" id="WP_015933579.1">
    <property type="nucleotide sequence ID" value="NC_011894.1"/>
</dbReference>
<dbReference type="SMR" id="B8ILP3"/>
<dbReference type="STRING" id="460265.Mnod_7279"/>
<dbReference type="KEGG" id="mno:Mnod_7279"/>
<dbReference type="eggNOG" id="COG0503">
    <property type="taxonomic scope" value="Bacteria"/>
</dbReference>
<dbReference type="HOGENOM" id="CLU_063339_3_0_5"/>
<dbReference type="OrthoDB" id="9803963at2"/>
<dbReference type="UniPathway" id="UPA00588">
    <property type="reaction ID" value="UER00646"/>
</dbReference>
<dbReference type="Proteomes" id="UP000008207">
    <property type="component" value="Chromosome"/>
</dbReference>
<dbReference type="GO" id="GO:0005737">
    <property type="term" value="C:cytoplasm"/>
    <property type="evidence" value="ECO:0007669"/>
    <property type="project" value="UniProtKB-SubCell"/>
</dbReference>
<dbReference type="GO" id="GO:0002055">
    <property type="term" value="F:adenine binding"/>
    <property type="evidence" value="ECO:0007669"/>
    <property type="project" value="TreeGrafter"/>
</dbReference>
<dbReference type="GO" id="GO:0003999">
    <property type="term" value="F:adenine phosphoribosyltransferase activity"/>
    <property type="evidence" value="ECO:0007669"/>
    <property type="project" value="UniProtKB-UniRule"/>
</dbReference>
<dbReference type="GO" id="GO:0016208">
    <property type="term" value="F:AMP binding"/>
    <property type="evidence" value="ECO:0007669"/>
    <property type="project" value="TreeGrafter"/>
</dbReference>
<dbReference type="GO" id="GO:0006168">
    <property type="term" value="P:adenine salvage"/>
    <property type="evidence" value="ECO:0007669"/>
    <property type="project" value="InterPro"/>
</dbReference>
<dbReference type="GO" id="GO:0044209">
    <property type="term" value="P:AMP salvage"/>
    <property type="evidence" value="ECO:0007669"/>
    <property type="project" value="UniProtKB-UniRule"/>
</dbReference>
<dbReference type="GO" id="GO:0006166">
    <property type="term" value="P:purine ribonucleoside salvage"/>
    <property type="evidence" value="ECO:0007669"/>
    <property type="project" value="UniProtKB-KW"/>
</dbReference>
<dbReference type="CDD" id="cd06223">
    <property type="entry name" value="PRTases_typeI"/>
    <property type="match status" value="1"/>
</dbReference>
<dbReference type="FunFam" id="3.40.50.2020:FF:000021">
    <property type="entry name" value="Adenine phosphoribosyltransferase"/>
    <property type="match status" value="1"/>
</dbReference>
<dbReference type="Gene3D" id="3.40.50.2020">
    <property type="match status" value="1"/>
</dbReference>
<dbReference type="HAMAP" id="MF_00004">
    <property type="entry name" value="Aden_phosphoribosyltr"/>
    <property type="match status" value="1"/>
</dbReference>
<dbReference type="InterPro" id="IPR005764">
    <property type="entry name" value="Ade_phspho_trans"/>
</dbReference>
<dbReference type="InterPro" id="IPR000836">
    <property type="entry name" value="PRibTrfase_dom"/>
</dbReference>
<dbReference type="InterPro" id="IPR029057">
    <property type="entry name" value="PRTase-like"/>
</dbReference>
<dbReference type="InterPro" id="IPR050054">
    <property type="entry name" value="UPRTase/APRTase"/>
</dbReference>
<dbReference type="NCBIfam" id="TIGR01090">
    <property type="entry name" value="apt"/>
    <property type="match status" value="1"/>
</dbReference>
<dbReference type="NCBIfam" id="NF002634">
    <property type="entry name" value="PRK02304.1-3"/>
    <property type="match status" value="1"/>
</dbReference>
<dbReference type="NCBIfam" id="NF002636">
    <property type="entry name" value="PRK02304.1-5"/>
    <property type="match status" value="1"/>
</dbReference>
<dbReference type="PANTHER" id="PTHR32315">
    <property type="entry name" value="ADENINE PHOSPHORIBOSYLTRANSFERASE"/>
    <property type="match status" value="1"/>
</dbReference>
<dbReference type="PANTHER" id="PTHR32315:SF3">
    <property type="entry name" value="ADENINE PHOSPHORIBOSYLTRANSFERASE"/>
    <property type="match status" value="1"/>
</dbReference>
<dbReference type="Pfam" id="PF00156">
    <property type="entry name" value="Pribosyltran"/>
    <property type="match status" value="1"/>
</dbReference>
<dbReference type="SUPFAM" id="SSF53271">
    <property type="entry name" value="PRTase-like"/>
    <property type="match status" value="1"/>
</dbReference>
<dbReference type="PROSITE" id="PS00103">
    <property type="entry name" value="PUR_PYR_PR_TRANSFER"/>
    <property type="match status" value="1"/>
</dbReference>